<protein>
    <recommendedName>
        <fullName evidence="1">Beta-ketoacyl-[acyl-carrier-protein] synthase III</fullName>
        <shortName evidence="1">Beta-ketoacyl-ACP synthase III</shortName>
        <shortName evidence="1">KAS III</shortName>
        <ecNumber evidence="1">2.3.1.180</ecNumber>
    </recommendedName>
    <alternativeName>
        <fullName evidence="1">3-oxoacyl-[acyl-carrier-protein] synthase 3</fullName>
    </alternativeName>
    <alternativeName>
        <fullName evidence="1">3-oxoacyl-[acyl-carrier-protein] synthase III</fullName>
    </alternativeName>
</protein>
<sequence>MANFAAITGWGMAVPERVLTNADLERMVETSDEWIQTRTGIRERRIAGPGEHTSALSIAAGRAALARAGLDAAQIDTVILATCTPDRPFPATACTVQAGVGARRAAAFDIVAACSGFVYGLQVATSMVRSGAARNVLFVACDIFTHFINWNDRNTCVLFGDGAGAVVLQPSDEPAGLLSCVLGADGEQEDLMAVDAGGTRLPATPELLEEGRQYVFMNGREIFKHAVREMAASSFDALQAAGLSTDDVALVIPHQANLRIIEATAKRLEVPLDRVFVNLDRYGNTSAASIPIALVEAVEQQRLRKGDYALLTSFGGGLTWASAVIRWSAG</sequence>
<accession>A7NK75</accession>
<comment type="function">
    <text evidence="1">Catalyzes the condensation reaction of fatty acid synthesis by the addition to an acyl acceptor of two carbons from malonyl-ACP. Catalyzes the first condensation reaction which initiates fatty acid synthesis and may therefore play a role in governing the total rate of fatty acid production. Possesses both acetoacetyl-ACP synthase and acetyl transacylase activities. Its substrate specificity determines the biosynthesis of branched-chain and/or straight-chain of fatty acids.</text>
</comment>
<comment type="catalytic activity">
    <reaction evidence="1">
        <text>malonyl-[ACP] + acetyl-CoA + H(+) = 3-oxobutanoyl-[ACP] + CO2 + CoA</text>
        <dbReference type="Rhea" id="RHEA:12080"/>
        <dbReference type="Rhea" id="RHEA-COMP:9623"/>
        <dbReference type="Rhea" id="RHEA-COMP:9625"/>
        <dbReference type="ChEBI" id="CHEBI:15378"/>
        <dbReference type="ChEBI" id="CHEBI:16526"/>
        <dbReference type="ChEBI" id="CHEBI:57287"/>
        <dbReference type="ChEBI" id="CHEBI:57288"/>
        <dbReference type="ChEBI" id="CHEBI:78449"/>
        <dbReference type="ChEBI" id="CHEBI:78450"/>
        <dbReference type="EC" id="2.3.1.180"/>
    </reaction>
</comment>
<comment type="pathway">
    <text evidence="1">Lipid metabolism; fatty acid biosynthesis.</text>
</comment>
<comment type="subunit">
    <text evidence="1">Homodimer.</text>
</comment>
<comment type="subcellular location">
    <subcellularLocation>
        <location evidence="1">Cytoplasm</location>
    </subcellularLocation>
</comment>
<comment type="domain">
    <text evidence="1">The last Arg residue of the ACP-binding site is essential for the weak association between ACP/AcpP and FabH.</text>
</comment>
<comment type="similarity">
    <text evidence="1">Belongs to the thiolase-like superfamily. FabH family.</text>
</comment>
<dbReference type="EC" id="2.3.1.180" evidence="1"/>
<dbReference type="EMBL" id="CP000804">
    <property type="protein sequence ID" value="ABU57895.1"/>
    <property type="molecule type" value="Genomic_DNA"/>
</dbReference>
<dbReference type="RefSeq" id="WP_012120320.1">
    <property type="nucleotide sequence ID" value="NC_009767.1"/>
</dbReference>
<dbReference type="SMR" id="A7NK75"/>
<dbReference type="STRING" id="383372.Rcas_1803"/>
<dbReference type="KEGG" id="rca:Rcas_1803"/>
<dbReference type="eggNOG" id="COG0332">
    <property type="taxonomic scope" value="Bacteria"/>
</dbReference>
<dbReference type="HOGENOM" id="CLU_039592_3_1_0"/>
<dbReference type="OrthoDB" id="9815506at2"/>
<dbReference type="UniPathway" id="UPA00094"/>
<dbReference type="Proteomes" id="UP000000263">
    <property type="component" value="Chromosome"/>
</dbReference>
<dbReference type="GO" id="GO:0005737">
    <property type="term" value="C:cytoplasm"/>
    <property type="evidence" value="ECO:0007669"/>
    <property type="project" value="UniProtKB-SubCell"/>
</dbReference>
<dbReference type="GO" id="GO:0004315">
    <property type="term" value="F:3-oxoacyl-[acyl-carrier-protein] synthase activity"/>
    <property type="evidence" value="ECO:0007669"/>
    <property type="project" value="InterPro"/>
</dbReference>
<dbReference type="GO" id="GO:0033818">
    <property type="term" value="F:beta-ketoacyl-acyl-carrier-protein synthase III activity"/>
    <property type="evidence" value="ECO:0007669"/>
    <property type="project" value="UniProtKB-UniRule"/>
</dbReference>
<dbReference type="GO" id="GO:0006633">
    <property type="term" value="P:fatty acid biosynthetic process"/>
    <property type="evidence" value="ECO:0007669"/>
    <property type="project" value="UniProtKB-UniRule"/>
</dbReference>
<dbReference type="GO" id="GO:0044550">
    <property type="term" value="P:secondary metabolite biosynthetic process"/>
    <property type="evidence" value="ECO:0007669"/>
    <property type="project" value="TreeGrafter"/>
</dbReference>
<dbReference type="CDD" id="cd00830">
    <property type="entry name" value="KAS_III"/>
    <property type="match status" value="1"/>
</dbReference>
<dbReference type="FunFam" id="3.40.47.10:FF:000004">
    <property type="entry name" value="3-oxoacyl-[acyl-carrier-protein] synthase 3"/>
    <property type="match status" value="1"/>
</dbReference>
<dbReference type="Gene3D" id="3.40.47.10">
    <property type="match status" value="1"/>
</dbReference>
<dbReference type="HAMAP" id="MF_01815">
    <property type="entry name" value="FabH"/>
    <property type="match status" value="1"/>
</dbReference>
<dbReference type="InterPro" id="IPR013747">
    <property type="entry name" value="ACP_syn_III_C"/>
</dbReference>
<dbReference type="InterPro" id="IPR013751">
    <property type="entry name" value="ACP_syn_III_N"/>
</dbReference>
<dbReference type="InterPro" id="IPR004655">
    <property type="entry name" value="FabH"/>
</dbReference>
<dbReference type="InterPro" id="IPR016039">
    <property type="entry name" value="Thiolase-like"/>
</dbReference>
<dbReference type="NCBIfam" id="TIGR00747">
    <property type="entry name" value="fabH"/>
    <property type="match status" value="1"/>
</dbReference>
<dbReference type="NCBIfam" id="NF006829">
    <property type="entry name" value="PRK09352.1"/>
    <property type="match status" value="1"/>
</dbReference>
<dbReference type="PANTHER" id="PTHR34069">
    <property type="entry name" value="3-OXOACYL-[ACYL-CARRIER-PROTEIN] SYNTHASE 3"/>
    <property type="match status" value="1"/>
</dbReference>
<dbReference type="PANTHER" id="PTHR34069:SF2">
    <property type="entry name" value="BETA-KETOACYL-[ACYL-CARRIER-PROTEIN] SYNTHASE III"/>
    <property type="match status" value="1"/>
</dbReference>
<dbReference type="Pfam" id="PF08545">
    <property type="entry name" value="ACP_syn_III"/>
    <property type="match status" value="1"/>
</dbReference>
<dbReference type="Pfam" id="PF08541">
    <property type="entry name" value="ACP_syn_III_C"/>
    <property type="match status" value="1"/>
</dbReference>
<dbReference type="SUPFAM" id="SSF53901">
    <property type="entry name" value="Thiolase-like"/>
    <property type="match status" value="1"/>
</dbReference>
<feature type="chain" id="PRO_1000088320" description="Beta-ketoacyl-[acyl-carrier-protein] synthase III">
    <location>
        <begin position="1"/>
        <end position="330"/>
    </location>
</feature>
<feature type="region of interest" description="ACP-binding" evidence="1">
    <location>
        <begin position="255"/>
        <end position="259"/>
    </location>
</feature>
<feature type="active site" evidence="1">
    <location>
        <position position="114"/>
    </location>
</feature>
<feature type="active site" evidence="1">
    <location>
        <position position="254"/>
    </location>
</feature>
<feature type="active site" evidence="1">
    <location>
        <position position="284"/>
    </location>
</feature>
<reference key="1">
    <citation type="submission" date="2007-08" db="EMBL/GenBank/DDBJ databases">
        <title>Complete sequence of Roseiflexus castenholzii DSM 13941.</title>
        <authorList>
            <consortium name="US DOE Joint Genome Institute"/>
            <person name="Copeland A."/>
            <person name="Lucas S."/>
            <person name="Lapidus A."/>
            <person name="Barry K."/>
            <person name="Glavina del Rio T."/>
            <person name="Dalin E."/>
            <person name="Tice H."/>
            <person name="Pitluck S."/>
            <person name="Thompson L.S."/>
            <person name="Brettin T."/>
            <person name="Bruce D."/>
            <person name="Detter J.C."/>
            <person name="Han C."/>
            <person name="Tapia R."/>
            <person name="Schmutz J."/>
            <person name="Larimer F."/>
            <person name="Land M."/>
            <person name="Hauser L."/>
            <person name="Kyrpides N."/>
            <person name="Mikhailova N."/>
            <person name="Bryant D.A."/>
            <person name="Hanada S."/>
            <person name="Tsukatani Y."/>
            <person name="Richardson P."/>
        </authorList>
    </citation>
    <scope>NUCLEOTIDE SEQUENCE [LARGE SCALE GENOMIC DNA]</scope>
    <source>
        <strain>DSM 13941 / HLO8</strain>
    </source>
</reference>
<proteinExistence type="inferred from homology"/>
<name>FABH_ROSCS</name>
<gene>
    <name evidence="1" type="primary">fabH</name>
    <name type="ordered locus">Rcas_1803</name>
</gene>
<keyword id="KW-0012">Acyltransferase</keyword>
<keyword id="KW-0963">Cytoplasm</keyword>
<keyword id="KW-0275">Fatty acid biosynthesis</keyword>
<keyword id="KW-0276">Fatty acid metabolism</keyword>
<keyword id="KW-0444">Lipid biosynthesis</keyword>
<keyword id="KW-0443">Lipid metabolism</keyword>
<keyword id="KW-0511">Multifunctional enzyme</keyword>
<keyword id="KW-1185">Reference proteome</keyword>
<keyword id="KW-0808">Transferase</keyword>
<organism>
    <name type="scientific">Roseiflexus castenholzii (strain DSM 13941 / HLO8)</name>
    <dbReference type="NCBI Taxonomy" id="383372"/>
    <lineage>
        <taxon>Bacteria</taxon>
        <taxon>Bacillati</taxon>
        <taxon>Chloroflexota</taxon>
        <taxon>Chloroflexia</taxon>
        <taxon>Chloroflexales</taxon>
        <taxon>Roseiflexineae</taxon>
        <taxon>Roseiflexaceae</taxon>
        <taxon>Roseiflexus</taxon>
    </lineage>
</organism>
<evidence type="ECO:0000255" key="1">
    <source>
        <dbReference type="HAMAP-Rule" id="MF_01815"/>
    </source>
</evidence>